<organism>
    <name type="scientific">Escherichia coli (strain 55989 / EAEC)</name>
    <dbReference type="NCBI Taxonomy" id="585055"/>
    <lineage>
        <taxon>Bacteria</taxon>
        <taxon>Pseudomonadati</taxon>
        <taxon>Pseudomonadota</taxon>
        <taxon>Gammaproteobacteria</taxon>
        <taxon>Enterobacterales</taxon>
        <taxon>Enterobacteriaceae</taxon>
        <taxon>Escherichia</taxon>
    </lineage>
</organism>
<proteinExistence type="inferred from homology"/>
<accession>B7L649</accession>
<comment type="function">
    <text evidence="1">Catalyzes the formation of 6,7-dimethyl-8-ribityllumazine by condensation of 5-amino-6-(D-ribitylamino)uracil with 3,4-dihydroxy-2-butanone 4-phosphate. This is the penultimate step in the biosynthesis of riboflavin.</text>
</comment>
<comment type="catalytic activity">
    <reaction evidence="1">
        <text>(2S)-2-hydroxy-3-oxobutyl phosphate + 5-amino-6-(D-ribitylamino)uracil = 6,7-dimethyl-8-(1-D-ribityl)lumazine + phosphate + 2 H2O + H(+)</text>
        <dbReference type="Rhea" id="RHEA:26152"/>
        <dbReference type="ChEBI" id="CHEBI:15377"/>
        <dbReference type="ChEBI" id="CHEBI:15378"/>
        <dbReference type="ChEBI" id="CHEBI:15934"/>
        <dbReference type="ChEBI" id="CHEBI:43474"/>
        <dbReference type="ChEBI" id="CHEBI:58201"/>
        <dbReference type="ChEBI" id="CHEBI:58830"/>
        <dbReference type="EC" id="2.5.1.78"/>
    </reaction>
</comment>
<comment type="pathway">
    <text evidence="1">Cofactor biosynthesis; riboflavin biosynthesis; riboflavin from 2-hydroxy-3-oxobutyl phosphate and 5-amino-6-(D-ribitylamino)uracil: step 1/2.</text>
</comment>
<comment type="subunit">
    <text evidence="1">Forms an icosahedral capsid composed of 60 subunits, arranged as a dodecamer of pentamers.</text>
</comment>
<comment type="similarity">
    <text evidence="1">Belongs to the DMRL synthase family.</text>
</comment>
<feature type="chain" id="PRO_1000195482" description="6,7-dimethyl-8-ribityllumazine synthase">
    <location>
        <begin position="1"/>
        <end position="156"/>
    </location>
</feature>
<feature type="active site" description="Proton donor" evidence="1">
    <location>
        <position position="89"/>
    </location>
</feature>
<feature type="binding site" evidence="1">
    <location>
        <position position="22"/>
    </location>
    <ligand>
        <name>5-amino-6-(D-ribitylamino)uracil</name>
        <dbReference type="ChEBI" id="CHEBI:15934"/>
    </ligand>
</feature>
<feature type="binding site" evidence="1">
    <location>
        <begin position="57"/>
        <end position="59"/>
    </location>
    <ligand>
        <name>5-amino-6-(D-ribitylamino)uracil</name>
        <dbReference type="ChEBI" id="CHEBI:15934"/>
    </ligand>
</feature>
<feature type="binding site" evidence="1">
    <location>
        <begin position="81"/>
        <end position="83"/>
    </location>
    <ligand>
        <name>5-amino-6-(D-ribitylamino)uracil</name>
        <dbReference type="ChEBI" id="CHEBI:15934"/>
    </ligand>
</feature>
<feature type="binding site" evidence="1">
    <location>
        <begin position="86"/>
        <end position="87"/>
    </location>
    <ligand>
        <name>(2S)-2-hydroxy-3-oxobutyl phosphate</name>
        <dbReference type="ChEBI" id="CHEBI:58830"/>
    </ligand>
</feature>
<feature type="binding site" evidence="1">
    <location>
        <position position="114"/>
    </location>
    <ligand>
        <name>5-amino-6-(D-ribitylamino)uracil</name>
        <dbReference type="ChEBI" id="CHEBI:15934"/>
    </ligand>
</feature>
<feature type="binding site" evidence="1">
    <location>
        <position position="128"/>
    </location>
    <ligand>
        <name>(2S)-2-hydroxy-3-oxobutyl phosphate</name>
        <dbReference type="ChEBI" id="CHEBI:58830"/>
    </ligand>
</feature>
<dbReference type="EC" id="2.5.1.78" evidence="1"/>
<dbReference type="EMBL" id="CU928145">
    <property type="protein sequence ID" value="CAU96299.1"/>
    <property type="molecule type" value="Genomic_DNA"/>
</dbReference>
<dbReference type="SMR" id="B7L649"/>
<dbReference type="KEGG" id="eck:EC55989_0425"/>
<dbReference type="HOGENOM" id="CLU_089358_1_1_6"/>
<dbReference type="UniPathway" id="UPA00275">
    <property type="reaction ID" value="UER00404"/>
</dbReference>
<dbReference type="Proteomes" id="UP000000746">
    <property type="component" value="Chromosome"/>
</dbReference>
<dbReference type="GO" id="GO:0005829">
    <property type="term" value="C:cytosol"/>
    <property type="evidence" value="ECO:0007669"/>
    <property type="project" value="TreeGrafter"/>
</dbReference>
<dbReference type="GO" id="GO:0009349">
    <property type="term" value="C:riboflavin synthase complex"/>
    <property type="evidence" value="ECO:0007669"/>
    <property type="project" value="InterPro"/>
</dbReference>
<dbReference type="GO" id="GO:0000906">
    <property type="term" value="F:6,7-dimethyl-8-ribityllumazine synthase activity"/>
    <property type="evidence" value="ECO:0007669"/>
    <property type="project" value="UniProtKB-UniRule"/>
</dbReference>
<dbReference type="GO" id="GO:0009231">
    <property type="term" value="P:riboflavin biosynthetic process"/>
    <property type="evidence" value="ECO:0007669"/>
    <property type="project" value="UniProtKB-UniRule"/>
</dbReference>
<dbReference type="CDD" id="cd09209">
    <property type="entry name" value="Lumazine_synthase-I"/>
    <property type="match status" value="1"/>
</dbReference>
<dbReference type="FunFam" id="3.40.50.960:FF:000001">
    <property type="entry name" value="6,7-dimethyl-8-ribityllumazine synthase"/>
    <property type="match status" value="1"/>
</dbReference>
<dbReference type="Gene3D" id="3.40.50.960">
    <property type="entry name" value="Lumazine/riboflavin synthase"/>
    <property type="match status" value="1"/>
</dbReference>
<dbReference type="HAMAP" id="MF_00178">
    <property type="entry name" value="Lumazine_synth"/>
    <property type="match status" value="1"/>
</dbReference>
<dbReference type="InterPro" id="IPR034964">
    <property type="entry name" value="LS"/>
</dbReference>
<dbReference type="InterPro" id="IPR002180">
    <property type="entry name" value="LS/RS"/>
</dbReference>
<dbReference type="InterPro" id="IPR036467">
    <property type="entry name" value="LS/RS_sf"/>
</dbReference>
<dbReference type="NCBIfam" id="TIGR00114">
    <property type="entry name" value="lumazine-synth"/>
    <property type="match status" value="1"/>
</dbReference>
<dbReference type="NCBIfam" id="NF000812">
    <property type="entry name" value="PRK00061.1-4"/>
    <property type="match status" value="1"/>
</dbReference>
<dbReference type="PANTHER" id="PTHR21058:SF0">
    <property type="entry name" value="6,7-DIMETHYL-8-RIBITYLLUMAZINE SYNTHASE"/>
    <property type="match status" value="1"/>
</dbReference>
<dbReference type="PANTHER" id="PTHR21058">
    <property type="entry name" value="6,7-DIMETHYL-8-RIBITYLLUMAZINE SYNTHASE DMRL SYNTHASE LUMAZINE SYNTHASE"/>
    <property type="match status" value="1"/>
</dbReference>
<dbReference type="Pfam" id="PF00885">
    <property type="entry name" value="DMRL_synthase"/>
    <property type="match status" value="1"/>
</dbReference>
<dbReference type="SUPFAM" id="SSF52121">
    <property type="entry name" value="Lumazine synthase"/>
    <property type="match status" value="1"/>
</dbReference>
<protein>
    <recommendedName>
        <fullName evidence="1">6,7-dimethyl-8-ribityllumazine synthase</fullName>
        <shortName evidence="1">DMRL synthase</shortName>
        <shortName evidence="1">LS</shortName>
        <shortName evidence="1">Lumazine synthase</shortName>
        <ecNumber evidence="1">2.5.1.78</ecNumber>
    </recommendedName>
</protein>
<name>RISB_ECO55</name>
<evidence type="ECO:0000255" key="1">
    <source>
        <dbReference type="HAMAP-Rule" id="MF_00178"/>
    </source>
</evidence>
<keyword id="KW-1185">Reference proteome</keyword>
<keyword id="KW-0686">Riboflavin biosynthesis</keyword>
<keyword id="KW-0808">Transferase</keyword>
<sequence length="156" mass="16157">MNIIEANVATPDARVAITIARFNNFINDSLLEGAIDALKRIGQVKDENITVVWVPGAYELPLAAGALAKTGKYDAVIALGTVIRGGTAHFEYVAGGASNGLAHVAQDSEIPVAFGVLTTESIEQAIERAGTKAGNKGAEAALTALEMINVLKAIKA</sequence>
<reference key="1">
    <citation type="journal article" date="2009" name="PLoS Genet.">
        <title>Organised genome dynamics in the Escherichia coli species results in highly diverse adaptive paths.</title>
        <authorList>
            <person name="Touchon M."/>
            <person name="Hoede C."/>
            <person name="Tenaillon O."/>
            <person name="Barbe V."/>
            <person name="Baeriswyl S."/>
            <person name="Bidet P."/>
            <person name="Bingen E."/>
            <person name="Bonacorsi S."/>
            <person name="Bouchier C."/>
            <person name="Bouvet O."/>
            <person name="Calteau A."/>
            <person name="Chiapello H."/>
            <person name="Clermont O."/>
            <person name="Cruveiller S."/>
            <person name="Danchin A."/>
            <person name="Diard M."/>
            <person name="Dossat C."/>
            <person name="Karoui M.E."/>
            <person name="Frapy E."/>
            <person name="Garry L."/>
            <person name="Ghigo J.M."/>
            <person name="Gilles A.M."/>
            <person name="Johnson J."/>
            <person name="Le Bouguenec C."/>
            <person name="Lescat M."/>
            <person name="Mangenot S."/>
            <person name="Martinez-Jehanne V."/>
            <person name="Matic I."/>
            <person name="Nassif X."/>
            <person name="Oztas S."/>
            <person name="Petit M.A."/>
            <person name="Pichon C."/>
            <person name="Rouy Z."/>
            <person name="Ruf C.S."/>
            <person name="Schneider D."/>
            <person name="Tourret J."/>
            <person name="Vacherie B."/>
            <person name="Vallenet D."/>
            <person name="Medigue C."/>
            <person name="Rocha E.P.C."/>
            <person name="Denamur E."/>
        </authorList>
    </citation>
    <scope>NUCLEOTIDE SEQUENCE [LARGE SCALE GENOMIC DNA]</scope>
    <source>
        <strain>55989 / EAEC</strain>
    </source>
</reference>
<gene>
    <name evidence="1" type="primary">ribH</name>
    <name type="ordered locus">EC55989_0425</name>
</gene>